<organism>
    <name type="scientific">Vibrio cholerae serotype O1 (strain ATCC 39541 / Classical Ogawa 395 / O395)</name>
    <dbReference type="NCBI Taxonomy" id="345073"/>
    <lineage>
        <taxon>Bacteria</taxon>
        <taxon>Pseudomonadati</taxon>
        <taxon>Pseudomonadota</taxon>
        <taxon>Gammaproteobacteria</taxon>
        <taxon>Vibrionales</taxon>
        <taxon>Vibrionaceae</taxon>
        <taxon>Vibrio</taxon>
    </lineage>
</organism>
<comment type="function">
    <text evidence="1">Catalyzes the circularization of gamma-N-acetyl-alpha,gamma-diaminobutyric acid (ADABA) to ectoine (1,4,5,6-tetrahydro-2-methyl-4-pyrimidine carboxylic acid), which is an excellent osmoprotectant.</text>
</comment>
<comment type="catalytic activity">
    <reaction evidence="1">
        <text>(2S)-4-acetamido-2-aminobutanoate = L-ectoine + H2O</text>
        <dbReference type="Rhea" id="RHEA:17281"/>
        <dbReference type="ChEBI" id="CHEBI:15377"/>
        <dbReference type="ChEBI" id="CHEBI:58515"/>
        <dbReference type="ChEBI" id="CHEBI:58929"/>
        <dbReference type="EC" id="4.2.1.108"/>
    </reaction>
</comment>
<comment type="pathway">
    <text evidence="1">Amine and polyamine biosynthesis; ectoine biosynthesis; L-ectoine from L-aspartate 4-semialdehyde: step 3/3.</text>
</comment>
<comment type="similarity">
    <text evidence="1">Belongs to the ectoine synthase family.</text>
</comment>
<reference key="1">
    <citation type="submission" date="2007-03" db="EMBL/GenBank/DDBJ databases">
        <authorList>
            <person name="Heidelberg J."/>
        </authorList>
    </citation>
    <scope>NUCLEOTIDE SEQUENCE [LARGE SCALE GENOMIC DNA]</scope>
    <source>
        <strain>ATCC 39541 / Classical Ogawa 395 / O395</strain>
    </source>
</reference>
<reference key="2">
    <citation type="journal article" date="2008" name="PLoS ONE">
        <title>A recalibrated molecular clock and independent origins for the cholera pandemic clones.</title>
        <authorList>
            <person name="Feng L."/>
            <person name="Reeves P.R."/>
            <person name="Lan R."/>
            <person name="Ren Y."/>
            <person name="Gao C."/>
            <person name="Zhou Z."/>
            <person name="Ren Y."/>
            <person name="Cheng J."/>
            <person name="Wang W."/>
            <person name="Wang J."/>
            <person name="Qian W."/>
            <person name="Li D."/>
            <person name="Wang L."/>
        </authorList>
    </citation>
    <scope>NUCLEOTIDE SEQUENCE [LARGE SCALE GENOMIC DNA]</scope>
    <source>
        <strain>ATCC 39541 / Classical Ogawa 395 / O395</strain>
    </source>
</reference>
<dbReference type="EC" id="4.2.1.108" evidence="1"/>
<dbReference type="EMBL" id="CP000626">
    <property type="protein sequence ID" value="ABQ19414.1"/>
    <property type="molecule type" value="Genomic_DNA"/>
</dbReference>
<dbReference type="EMBL" id="CP001236">
    <property type="protein sequence ID" value="ACP11680.1"/>
    <property type="molecule type" value="Genomic_DNA"/>
</dbReference>
<dbReference type="RefSeq" id="WP_000637098.1">
    <property type="nucleotide sequence ID" value="NZ_JAACZH010000012.1"/>
</dbReference>
<dbReference type="SMR" id="A5F0H9"/>
<dbReference type="KEGG" id="vco:VC0395_0411"/>
<dbReference type="KEGG" id="vcr:VC395_A0847"/>
<dbReference type="PATRIC" id="fig|345073.21.peg.3578"/>
<dbReference type="eggNOG" id="COG0662">
    <property type="taxonomic scope" value="Bacteria"/>
</dbReference>
<dbReference type="HOGENOM" id="CLU_154525_0_0_6"/>
<dbReference type="OrthoDB" id="9801830at2"/>
<dbReference type="UniPathway" id="UPA00067">
    <property type="reaction ID" value="UER00123"/>
</dbReference>
<dbReference type="Proteomes" id="UP000000249">
    <property type="component" value="Chromosome 1"/>
</dbReference>
<dbReference type="GO" id="GO:0033990">
    <property type="term" value="F:ectoine synthase activity"/>
    <property type="evidence" value="ECO:0007669"/>
    <property type="project" value="UniProtKB-EC"/>
</dbReference>
<dbReference type="GO" id="GO:0019491">
    <property type="term" value="P:ectoine biosynthetic process"/>
    <property type="evidence" value="ECO:0007669"/>
    <property type="project" value="UniProtKB-UniRule"/>
</dbReference>
<dbReference type="CDD" id="cd06978">
    <property type="entry name" value="cupin_EctC"/>
    <property type="match status" value="1"/>
</dbReference>
<dbReference type="Gene3D" id="2.60.120.10">
    <property type="entry name" value="Jelly Rolls"/>
    <property type="match status" value="1"/>
</dbReference>
<dbReference type="HAMAP" id="MF_01255">
    <property type="entry name" value="Ectoine_synth"/>
    <property type="match status" value="1"/>
</dbReference>
<dbReference type="InterPro" id="IPR010462">
    <property type="entry name" value="Ectoine_synth"/>
</dbReference>
<dbReference type="InterPro" id="IPR014710">
    <property type="entry name" value="RmlC-like_jellyroll"/>
</dbReference>
<dbReference type="InterPro" id="IPR011051">
    <property type="entry name" value="RmlC_Cupin_sf"/>
</dbReference>
<dbReference type="NCBIfam" id="NF009806">
    <property type="entry name" value="PRK13290.1"/>
    <property type="match status" value="1"/>
</dbReference>
<dbReference type="PANTHER" id="PTHR39289">
    <property type="match status" value="1"/>
</dbReference>
<dbReference type="PANTHER" id="PTHR39289:SF1">
    <property type="entry name" value="L-ECTOINE SYNTHASE"/>
    <property type="match status" value="1"/>
</dbReference>
<dbReference type="Pfam" id="PF06339">
    <property type="entry name" value="Ectoine_synth"/>
    <property type="match status" value="1"/>
</dbReference>
<dbReference type="SUPFAM" id="SSF51182">
    <property type="entry name" value="RmlC-like cupins"/>
    <property type="match status" value="1"/>
</dbReference>
<name>ECTC_VIBC3</name>
<evidence type="ECO:0000255" key="1">
    <source>
        <dbReference type="HAMAP-Rule" id="MF_01255"/>
    </source>
</evidence>
<gene>
    <name evidence="1" type="primary">ectC</name>
    <name type="ordered locus">VC0395_0411</name>
    <name type="ordered locus">VC395_A0847</name>
</gene>
<keyword id="KW-0456">Lyase</keyword>
<feature type="chain" id="PRO_1000073178" description="L-ectoine synthase">
    <location>
        <begin position="1"/>
        <end position="138"/>
    </location>
</feature>
<sequence length="138" mass="15996">MIVRTLEECRQSERRVVAENWESVRMLLKDDHMGFSFHITTIYANTQTHIHYRNHLESVYCMSGEGEIEVVGGKTYPIQPGTLYILDQHDEHYLRAFSSEMVMACVFNPPLTGHEIHDAEGVYPLDKSELISQCHKEK</sequence>
<proteinExistence type="inferred from homology"/>
<accession>A5F0H9</accession>
<accession>C3M6B7</accession>
<protein>
    <recommendedName>
        <fullName evidence="1">L-ectoine synthase</fullName>
        <ecNumber evidence="1">4.2.1.108</ecNumber>
    </recommendedName>
    <alternativeName>
        <fullName evidence="1">N-acetyldiaminobutyrate dehydratase</fullName>
    </alternativeName>
</protein>